<proteinExistence type="inferred from homology"/>
<organism>
    <name type="scientific">Prochlorococcus marinus (strain AS9601)</name>
    <dbReference type="NCBI Taxonomy" id="146891"/>
    <lineage>
        <taxon>Bacteria</taxon>
        <taxon>Bacillati</taxon>
        <taxon>Cyanobacteriota</taxon>
        <taxon>Cyanophyceae</taxon>
        <taxon>Synechococcales</taxon>
        <taxon>Prochlorococcaceae</taxon>
        <taxon>Prochlorococcus</taxon>
    </lineage>
</organism>
<name>AROA_PROMS</name>
<reference key="1">
    <citation type="journal article" date="2007" name="PLoS Genet.">
        <title>Patterns and implications of gene gain and loss in the evolution of Prochlorococcus.</title>
        <authorList>
            <person name="Kettler G.C."/>
            <person name="Martiny A.C."/>
            <person name="Huang K."/>
            <person name="Zucker J."/>
            <person name="Coleman M.L."/>
            <person name="Rodrigue S."/>
            <person name="Chen F."/>
            <person name="Lapidus A."/>
            <person name="Ferriera S."/>
            <person name="Johnson J."/>
            <person name="Steglich C."/>
            <person name="Church G.M."/>
            <person name="Richardson P."/>
            <person name="Chisholm S.W."/>
        </authorList>
    </citation>
    <scope>NUCLEOTIDE SEQUENCE [LARGE SCALE GENOMIC DNA]</scope>
    <source>
        <strain>AS9601</strain>
    </source>
</reference>
<gene>
    <name evidence="1" type="primary">aroA</name>
    <name type="ordered locus">A9601_06691</name>
</gene>
<protein>
    <recommendedName>
        <fullName evidence="1">3-phosphoshikimate 1-carboxyvinyltransferase</fullName>
        <ecNumber evidence="1">2.5.1.19</ecNumber>
    </recommendedName>
    <alternativeName>
        <fullName evidence="1">5-enolpyruvylshikimate-3-phosphate synthase</fullName>
        <shortName evidence="1">EPSP synthase</shortName>
        <shortName evidence="1">EPSPS</shortName>
    </alternativeName>
</protein>
<feature type="chain" id="PRO_1000012461" description="3-phosphoshikimate 1-carboxyvinyltransferase">
    <location>
        <begin position="1"/>
        <end position="436"/>
    </location>
</feature>
<feature type="active site" description="Proton acceptor" evidence="1">
    <location>
        <position position="323"/>
    </location>
</feature>
<feature type="binding site" evidence="1">
    <location>
        <position position="23"/>
    </location>
    <ligand>
        <name>3-phosphoshikimate</name>
        <dbReference type="ChEBI" id="CHEBI:145989"/>
    </ligand>
</feature>
<feature type="binding site" evidence="1">
    <location>
        <position position="23"/>
    </location>
    <ligand>
        <name>phosphoenolpyruvate</name>
        <dbReference type="ChEBI" id="CHEBI:58702"/>
    </ligand>
</feature>
<feature type="binding site" evidence="1">
    <location>
        <position position="24"/>
    </location>
    <ligand>
        <name>3-phosphoshikimate</name>
        <dbReference type="ChEBI" id="CHEBI:145989"/>
    </ligand>
</feature>
<feature type="binding site" evidence="1">
    <location>
        <position position="28"/>
    </location>
    <ligand>
        <name>3-phosphoshikimate</name>
        <dbReference type="ChEBI" id="CHEBI:145989"/>
    </ligand>
</feature>
<feature type="binding site" evidence="1">
    <location>
        <position position="97"/>
    </location>
    <ligand>
        <name>phosphoenolpyruvate</name>
        <dbReference type="ChEBI" id="CHEBI:58702"/>
    </ligand>
</feature>
<feature type="binding site" evidence="1">
    <location>
        <position position="126"/>
    </location>
    <ligand>
        <name>phosphoenolpyruvate</name>
        <dbReference type="ChEBI" id="CHEBI:58702"/>
    </ligand>
</feature>
<feature type="binding site" evidence="1">
    <location>
        <position position="171"/>
    </location>
    <ligand>
        <name>3-phosphoshikimate</name>
        <dbReference type="ChEBI" id="CHEBI:145989"/>
    </ligand>
</feature>
<feature type="binding site" evidence="1">
    <location>
        <position position="173"/>
    </location>
    <ligand>
        <name>3-phosphoshikimate</name>
        <dbReference type="ChEBI" id="CHEBI:145989"/>
    </ligand>
</feature>
<feature type="binding site" evidence="1">
    <location>
        <position position="173"/>
    </location>
    <ligand>
        <name>phosphoenolpyruvate</name>
        <dbReference type="ChEBI" id="CHEBI:58702"/>
    </ligand>
</feature>
<feature type="binding site" evidence="1">
    <location>
        <position position="323"/>
    </location>
    <ligand>
        <name>3-phosphoshikimate</name>
        <dbReference type="ChEBI" id="CHEBI:145989"/>
    </ligand>
</feature>
<feature type="binding site" evidence="1">
    <location>
        <position position="350"/>
    </location>
    <ligand>
        <name>3-phosphoshikimate</name>
        <dbReference type="ChEBI" id="CHEBI:145989"/>
    </ligand>
</feature>
<feature type="binding site" evidence="1">
    <location>
        <position position="354"/>
    </location>
    <ligand>
        <name>phosphoenolpyruvate</name>
        <dbReference type="ChEBI" id="CHEBI:58702"/>
    </ligand>
</feature>
<feature type="binding site" evidence="1">
    <location>
        <position position="396"/>
    </location>
    <ligand>
        <name>phosphoenolpyruvate</name>
        <dbReference type="ChEBI" id="CHEBI:58702"/>
    </ligand>
</feature>
<comment type="function">
    <text evidence="1">Catalyzes the transfer of the enolpyruvyl moiety of phosphoenolpyruvate (PEP) to the 5-hydroxyl of shikimate-3-phosphate (S3P) to produce enolpyruvyl shikimate-3-phosphate and inorganic phosphate.</text>
</comment>
<comment type="catalytic activity">
    <reaction evidence="1">
        <text>3-phosphoshikimate + phosphoenolpyruvate = 5-O-(1-carboxyvinyl)-3-phosphoshikimate + phosphate</text>
        <dbReference type="Rhea" id="RHEA:21256"/>
        <dbReference type="ChEBI" id="CHEBI:43474"/>
        <dbReference type="ChEBI" id="CHEBI:57701"/>
        <dbReference type="ChEBI" id="CHEBI:58702"/>
        <dbReference type="ChEBI" id="CHEBI:145989"/>
        <dbReference type="EC" id="2.5.1.19"/>
    </reaction>
    <physiologicalReaction direction="left-to-right" evidence="1">
        <dbReference type="Rhea" id="RHEA:21257"/>
    </physiologicalReaction>
</comment>
<comment type="pathway">
    <text evidence="1">Metabolic intermediate biosynthesis; chorismate biosynthesis; chorismate from D-erythrose 4-phosphate and phosphoenolpyruvate: step 6/7.</text>
</comment>
<comment type="subunit">
    <text evidence="1">Monomer.</text>
</comment>
<comment type="subcellular location">
    <subcellularLocation>
        <location evidence="1">Cytoplasm</location>
    </subcellularLocation>
</comment>
<comment type="similarity">
    <text evidence="1">Belongs to the EPSP synthase family.</text>
</comment>
<keyword id="KW-0028">Amino-acid biosynthesis</keyword>
<keyword id="KW-0057">Aromatic amino acid biosynthesis</keyword>
<keyword id="KW-0963">Cytoplasm</keyword>
<keyword id="KW-0808">Transferase</keyword>
<sequence length="436" mass="46409">MNNIRTIKGGVNLKGKVKVPGDKSISHRALIIGSIANGETTIEGFLHSEDPLSTADCLRKLGVNIPEIKKNEPFTISGLGLDGLKEPKEILNCGNSGTTMRLLMGLLAGQEDKNFILTGDISLNERPMGRVGKPLSLMGGKIFGREKGNKAPISIDGNKLKGCVIGTPVASAQVKSAILLAGLKASGTTSVIEPASSRDHTERMLKAFGADISVRGELGRNVVIKSGGKLIGQRILIPGDISSASFWMIAASIVPNSEVLIQNVGLNPTRTGILNVMDSMGCNYEILDKSTIAGEPIGSIKVKSSNNLKSFTIEGDILPKLIDEIPILTVAACFCNGVSEIKDAQELRVKETDRLKVMARQLQKFGAEVTEKEDGLIINGQSKFNSAEVDSETDHRVAMSLAIASLLAKGTSKIMRADAASVSYPTFWEDLATLTN</sequence>
<accession>A2BQ94</accession>
<dbReference type="EC" id="2.5.1.19" evidence="1"/>
<dbReference type="EMBL" id="CP000551">
    <property type="protein sequence ID" value="ABM69955.1"/>
    <property type="molecule type" value="Genomic_DNA"/>
</dbReference>
<dbReference type="SMR" id="A2BQ94"/>
<dbReference type="STRING" id="146891.A9601_06691"/>
<dbReference type="KEGG" id="pmb:A9601_06691"/>
<dbReference type="eggNOG" id="COG0128">
    <property type="taxonomic scope" value="Bacteria"/>
</dbReference>
<dbReference type="HOGENOM" id="CLU_024321_0_1_3"/>
<dbReference type="OrthoDB" id="9809920at2"/>
<dbReference type="UniPathway" id="UPA00053">
    <property type="reaction ID" value="UER00089"/>
</dbReference>
<dbReference type="Proteomes" id="UP000002590">
    <property type="component" value="Chromosome"/>
</dbReference>
<dbReference type="GO" id="GO:0005737">
    <property type="term" value="C:cytoplasm"/>
    <property type="evidence" value="ECO:0007669"/>
    <property type="project" value="UniProtKB-SubCell"/>
</dbReference>
<dbReference type="GO" id="GO:0003866">
    <property type="term" value="F:3-phosphoshikimate 1-carboxyvinyltransferase activity"/>
    <property type="evidence" value="ECO:0007669"/>
    <property type="project" value="UniProtKB-UniRule"/>
</dbReference>
<dbReference type="GO" id="GO:0008652">
    <property type="term" value="P:amino acid biosynthetic process"/>
    <property type="evidence" value="ECO:0007669"/>
    <property type="project" value="UniProtKB-KW"/>
</dbReference>
<dbReference type="GO" id="GO:0009073">
    <property type="term" value="P:aromatic amino acid family biosynthetic process"/>
    <property type="evidence" value="ECO:0007669"/>
    <property type="project" value="UniProtKB-KW"/>
</dbReference>
<dbReference type="GO" id="GO:0009423">
    <property type="term" value="P:chorismate biosynthetic process"/>
    <property type="evidence" value="ECO:0007669"/>
    <property type="project" value="UniProtKB-UniRule"/>
</dbReference>
<dbReference type="CDD" id="cd01556">
    <property type="entry name" value="EPSP_synthase"/>
    <property type="match status" value="1"/>
</dbReference>
<dbReference type="FunFam" id="3.65.10.10:FF:000005">
    <property type="entry name" value="3-phosphoshikimate 1-carboxyvinyltransferase"/>
    <property type="match status" value="1"/>
</dbReference>
<dbReference type="FunFam" id="3.65.10.10:FF:000006">
    <property type="entry name" value="3-phosphoshikimate 1-carboxyvinyltransferase"/>
    <property type="match status" value="1"/>
</dbReference>
<dbReference type="Gene3D" id="3.65.10.10">
    <property type="entry name" value="Enolpyruvate transferase domain"/>
    <property type="match status" value="2"/>
</dbReference>
<dbReference type="HAMAP" id="MF_00210">
    <property type="entry name" value="EPSP_synth"/>
    <property type="match status" value="1"/>
</dbReference>
<dbReference type="InterPro" id="IPR001986">
    <property type="entry name" value="Enolpyruvate_Tfrase_dom"/>
</dbReference>
<dbReference type="InterPro" id="IPR036968">
    <property type="entry name" value="Enolpyruvate_Tfrase_sf"/>
</dbReference>
<dbReference type="InterPro" id="IPR006264">
    <property type="entry name" value="EPSP_synthase"/>
</dbReference>
<dbReference type="InterPro" id="IPR023193">
    <property type="entry name" value="EPSP_synthase_CS"/>
</dbReference>
<dbReference type="InterPro" id="IPR013792">
    <property type="entry name" value="RNA3'P_cycl/enolpyr_Trfase_a/b"/>
</dbReference>
<dbReference type="NCBIfam" id="TIGR01356">
    <property type="entry name" value="aroA"/>
    <property type="match status" value="1"/>
</dbReference>
<dbReference type="PANTHER" id="PTHR21090">
    <property type="entry name" value="AROM/DEHYDROQUINATE SYNTHASE"/>
    <property type="match status" value="1"/>
</dbReference>
<dbReference type="PANTHER" id="PTHR21090:SF5">
    <property type="entry name" value="PENTAFUNCTIONAL AROM POLYPEPTIDE"/>
    <property type="match status" value="1"/>
</dbReference>
<dbReference type="Pfam" id="PF00275">
    <property type="entry name" value="EPSP_synthase"/>
    <property type="match status" value="1"/>
</dbReference>
<dbReference type="PIRSF" id="PIRSF000505">
    <property type="entry name" value="EPSPS"/>
    <property type="match status" value="1"/>
</dbReference>
<dbReference type="SUPFAM" id="SSF55205">
    <property type="entry name" value="EPT/RTPC-like"/>
    <property type="match status" value="1"/>
</dbReference>
<dbReference type="PROSITE" id="PS00104">
    <property type="entry name" value="EPSP_SYNTHASE_1"/>
    <property type="match status" value="1"/>
</dbReference>
<dbReference type="PROSITE" id="PS00885">
    <property type="entry name" value="EPSP_SYNTHASE_2"/>
    <property type="match status" value="1"/>
</dbReference>
<evidence type="ECO:0000255" key="1">
    <source>
        <dbReference type="HAMAP-Rule" id="MF_00210"/>
    </source>
</evidence>